<evidence type="ECO:0000255" key="1">
    <source>
        <dbReference type="HAMAP-Rule" id="MF_00001"/>
    </source>
</evidence>
<reference key="1">
    <citation type="journal article" date="2007" name="PLoS Genet.">
        <title>Patterns and implications of gene gain and loss in the evolution of Prochlorococcus.</title>
        <authorList>
            <person name="Kettler G.C."/>
            <person name="Martiny A.C."/>
            <person name="Huang K."/>
            <person name="Zucker J."/>
            <person name="Coleman M.L."/>
            <person name="Rodrigue S."/>
            <person name="Chen F."/>
            <person name="Lapidus A."/>
            <person name="Ferriera S."/>
            <person name="Johnson J."/>
            <person name="Steglich C."/>
            <person name="Church G.M."/>
            <person name="Richardson P."/>
            <person name="Chisholm S.W."/>
        </authorList>
    </citation>
    <scope>NUCLEOTIDE SEQUENCE [LARGE SCALE GENOMIC DNA]</scope>
    <source>
        <strain>MIT 9515</strain>
    </source>
</reference>
<keyword id="KW-0665">Pyrimidine biosynthesis</keyword>
<keyword id="KW-0808">Transferase</keyword>
<gene>
    <name evidence="1" type="primary">pyrB</name>
    <name type="ordered locus">P9515_02651</name>
</gene>
<proteinExistence type="inferred from homology"/>
<dbReference type="EC" id="2.1.3.2" evidence="1"/>
<dbReference type="EMBL" id="CP000552">
    <property type="protein sequence ID" value="ABM71474.1"/>
    <property type="molecule type" value="Genomic_DNA"/>
</dbReference>
<dbReference type="RefSeq" id="WP_011819586.1">
    <property type="nucleotide sequence ID" value="NC_008817.1"/>
</dbReference>
<dbReference type="SMR" id="A2BUL3"/>
<dbReference type="STRING" id="167542.P9515_02651"/>
<dbReference type="GeneID" id="60200854"/>
<dbReference type="KEGG" id="pmc:P9515_02651"/>
<dbReference type="eggNOG" id="COG0540">
    <property type="taxonomic scope" value="Bacteria"/>
</dbReference>
<dbReference type="HOGENOM" id="CLU_043846_2_0_3"/>
<dbReference type="OrthoDB" id="9774690at2"/>
<dbReference type="UniPathway" id="UPA00070">
    <property type="reaction ID" value="UER00116"/>
</dbReference>
<dbReference type="Proteomes" id="UP000001589">
    <property type="component" value="Chromosome"/>
</dbReference>
<dbReference type="GO" id="GO:0005829">
    <property type="term" value="C:cytosol"/>
    <property type="evidence" value="ECO:0007669"/>
    <property type="project" value="TreeGrafter"/>
</dbReference>
<dbReference type="GO" id="GO:0016597">
    <property type="term" value="F:amino acid binding"/>
    <property type="evidence" value="ECO:0007669"/>
    <property type="project" value="InterPro"/>
</dbReference>
<dbReference type="GO" id="GO:0004070">
    <property type="term" value="F:aspartate carbamoyltransferase activity"/>
    <property type="evidence" value="ECO:0007669"/>
    <property type="project" value="UniProtKB-UniRule"/>
</dbReference>
<dbReference type="GO" id="GO:0006207">
    <property type="term" value="P:'de novo' pyrimidine nucleobase biosynthetic process"/>
    <property type="evidence" value="ECO:0007669"/>
    <property type="project" value="InterPro"/>
</dbReference>
<dbReference type="GO" id="GO:0044205">
    <property type="term" value="P:'de novo' UMP biosynthetic process"/>
    <property type="evidence" value="ECO:0007669"/>
    <property type="project" value="UniProtKB-UniRule"/>
</dbReference>
<dbReference type="GO" id="GO:0006520">
    <property type="term" value="P:amino acid metabolic process"/>
    <property type="evidence" value="ECO:0007669"/>
    <property type="project" value="InterPro"/>
</dbReference>
<dbReference type="Gene3D" id="3.40.50.1370">
    <property type="entry name" value="Aspartate/ornithine carbamoyltransferase"/>
    <property type="match status" value="2"/>
</dbReference>
<dbReference type="HAMAP" id="MF_00001">
    <property type="entry name" value="Asp_carb_tr"/>
    <property type="match status" value="1"/>
</dbReference>
<dbReference type="InterPro" id="IPR006132">
    <property type="entry name" value="Asp/Orn_carbamoyltranf_P-bd"/>
</dbReference>
<dbReference type="InterPro" id="IPR006130">
    <property type="entry name" value="Asp/Orn_carbamoylTrfase"/>
</dbReference>
<dbReference type="InterPro" id="IPR036901">
    <property type="entry name" value="Asp/Orn_carbamoylTrfase_sf"/>
</dbReference>
<dbReference type="InterPro" id="IPR002082">
    <property type="entry name" value="Asp_carbamoyltransf"/>
</dbReference>
<dbReference type="InterPro" id="IPR006131">
    <property type="entry name" value="Asp_carbamoyltransf_Asp/Orn-bd"/>
</dbReference>
<dbReference type="NCBIfam" id="TIGR00670">
    <property type="entry name" value="asp_carb_tr"/>
    <property type="match status" value="1"/>
</dbReference>
<dbReference type="NCBIfam" id="NF002032">
    <property type="entry name" value="PRK00856.1"/>
    <property type="match status" value="1"/>
</dbReference>
<dbReference type="PANTHER" id="PTHR45753:SF6">
    <property type="entry name" value="ASPARTATE CARBAMOYLTRANSFERASE"/>
    <property type="match status" value="1"/>
</dbReference>
<dbReference type="PANTHER" id="PTHR45753">
    <property type="entry name" value="ORNITHINE CARBAMOYLTRANSFERASE, MITOCHONDRIAL"/>
    <property type="match status" value="1"/>
</dbReference>
<dbReference type="Pfam" id="PF00185">
    <property type="entry name" value="OTCace"/>
    <property type="match status" value="1"/>
</dbReference>
<dbReference type="Pfam" id="PF02729">
    <property type="entry name" value="OTCace_N"/>
    <property type="match status" value="1"/>
</dbReference>
<dbReference type="PRINTS" id="PR00100">
    <property type="entry name" value="AOTCASE"/>
</dbReference>
<dbReference type="PRINTS" id="PR00101">
    <property type="entry name" value="ATCASE"/>
</dbReference>
<dbReference type="SUPFAM" id="SSF53671">
    <property type="entry name" value="Aspartate/ornithine carbamoyltransferase"/>
    <property type="match status" value="1"/>
</dbReference>
<dbReference type="PROSITE" id="PS00097">
    <property type="entry name" value="CARBAMOYLTRANSFERASE"/>
    <property type="match status" value="1"/>
</dbReference>
<organism>
    <name type="scientific">Prochlorococcus marinus (strain MIT 9515)</name>
    <dbReference type="NCBI Taxonomy" id="167542"/>
    <lineage>
        <taxon>Bacteria</taxon>
        <taxon>Bacillati</taxon>
        <taxon>Cyanobacteriota</taxon>
        <taxon>Cyanophyceae</taxon>
        <taxon>Synechococcales</taxon>
        <taxon>Prochlorococcaceae</taxon>
        <taxon>Prochlorococcus</taxon>
    </lineage>
</organism>
<accession>A2BUL3</accession>
<comment type="function">
    <text evidence="1">Catalyzes the condensation of carbamoyl phosphate and aspartate to form carbamoyl aspartate and inorganic phosphate, the committed step in the de novo pyrimidine nucleotide biosynthesis pathway.</text>
</comment>
<comment type="catalytic activity">
    <reaction evidence="1">
        <text>carbamoyl phosphate + L-aspartate = N-carbamoyl-L-aspartate + phosphate + H(+)</text>
        <dbReference type="Rhea" id="RHEA:20013"/>
        <dbReference type="ChEBI" id="CHEBI:15378"/>
        <dbReference type="ChEBI" id="CHEBI:29991"/>
        <dbReference type="ChEBI" id="CHEBI:32814"/>
        <dbReference type="ChEBI" id="CHEBI:43474"/>
        <dbReference type="ChEBI" id="CHEBI:58228"/>
        <dbReference type="EC" id="2.1.3.2"/>
    </reaction>
</comment>
<comment type="pathway">
    <text evidence="1">Pyrimidine metabolism; UMP biosynthesis via de novo pathway; (S)-dihydroorotate from bicarbonate: step 2/3.</text>
</comment>
<comment type="subunit">
    <text evidence="1">Heterododecamer (2C3:3R2) of six catalytic PyrB chains organized as two trimers (C3), and six regulatory PyrI chains organized as three dimers (R2).</text>
</comment>
<comment type="similarity">
    <text evidence="1">Belongs to the aspartate/ornithine carbamoyltransferase superfamily. ATCase family.</text>
</comment>
<name>PYRB_PROM5</name>
<protein>
    <recommendedName>
        <fullName evidence="1">Aspartate carbamoyltransferase catalytic subunit</fullName>
        <ecNumber evidence="1">2.1.3.2</ecNumber>
    </recommendedName>
    <alternativeName>
        <fullName evidence="1">Aspartate transcarbamylase</fullName>
        <shortName evidence="1">ATCase</shortName>
    </alternativeName>
</protein>
<sequence>MGNWPHKHILTLSNFSIYDYKSVFELTERFKSLINAGTKKIPALQGNLITSIFFEASTRTRNSFELAAKRLSADVQSFSPSSSSLSKGETLIDTALTYAAMGSDILIIRHSSSHVPLEISKKLDATNTKTSVLNAGDGLHSHPSQGLLDLYTLIKFFSPELMKPEILYSKKILIVGDVLHSRVARSNLWALTAFGANVILCGPPTLIPEEFTSFVSSSPPNQLRDPISSRGSITISRSLEDSIKDADAVIVLRLQKERMMENLLSSIKSYSENYCLTPEKLSMNDKNIPILHPGPINRGIEISSRIVDEYPNCLINDQVSNGIPTRMALLYLLSKFNK</sequence>
<feature type="chain" id="PRO_0000301604" description="Aspartate carbamoyltransferase catalytic subunit">
    <location>
        <begin position="1"/>
        <end position="338"/>
    </location>
</feature>
<feature type="binding site" evidence="1">
    <location>
        <position position="59"/>
    </location>
    <ligand>
        <name>carbamoyl phosphate</name>
        <dbReference type="ChEBI" id="CHEBI:58228"/>
    </ligand>
</feature>
<feature type="binding site" evidence="1">
    <location>
        <position position="60"/>
    </location>
    <ligand>
        <name>carbamoyl phosphate</name>
        <dbReference type="ChEBI" id="CHEBI:58228"/>
    </ligand>
</feature>
<feature type="binding site" evidence="1">
    <location>
        <position position="87"/>
    </location>
    <ligand>
        <name>L-aspartate</name>
        <dbReference type="ChEBI" id="CHEBI:29991"/>
    </ligand>
</feature>
<feature type="binding site" evidence="1">
    <location>
        <position position="109"/>
    </location>
    <ligand>
        <name>carbamoyl phosphate</name>
        <dbReference type="ChEBI" id="CHEBI:58228"/>
    </ligand>
</feature>
<feature type="binding site" evidence="1">
    <location>
        <position position="142"/>
    </location>
    <ligand>
        <name>carbamoyl phosphate</name>
        <dbReference type="ChEBI" id="CHEBI:58228"/>
    </ligand>
</feature>
<feature type="binding site" evidence="1">
    <location>
        <position position="145"/>
    </location>
    <ligand>
        <name>carbamoyl phosphate</name>
        <dbReference type="ChEBI" id="CHEBI:58228"/>
    </ligand>
</feature>
<feature type="binding site" evidence="1">
    <location>
        <position position="182"/>
    </location>
    <ligand>
        <name>L-aspartate</name>
        <dbReference type="ChEBI" id="CHEBI:29991"/>
    </ligand>
</feature>
<feature type="binding site" evidence="1">
    <location>
        <position position="253"/>
    </location>
    <ligand>
        <name>L-aspartate</name>
        <dbReference type="ChEBI" id="CHEBI:29991"/>
    </ligand>
</feature>
<feature type="binding site" evidence="1">
    <location>
        <position position="294"/>
    </location>
    <ligand>
        <name>carbamoyl phosphate</name>
        <dbReference type="ChEBI" id="CHEBI:58228"/>
    </ligand>
</feature>
<feature type="binding site" evidence="1">
    <location>
        <position position="295"/>
    </location>
    <ligand>
        <name>carbamoyl phosphate</name>
        <dbReference type="ChEBI" id="CHEBI:58228"/>
    </ligand>
</feature>